<dbReference type="EMBL" id="CP001631">
    <property type="protein sequence ID" value="ACU54199.1"/>
    <property type="molecule type" value="Genomic_DNA"/>
</dbReference>
<dbReference type="RefSeq" id="WP_015798685.1">
    <property type="nucleotide sequence ID" value="NC_013124.1"/>
</dbReference>
<dbReference type="SMR" id="C7LZP1"/>
<dbReference type="STRING" id="525909.Afer_1268"/>
<dbReference type="KEGG" id="afo:Afer_1268"/>
<dbReference type="eggNOG" id="COG1159">
    <property type="taxonomic scope" value="Bacteria"/>
</dbReference>
<dbReference type="HOGENOM" id="CLU_038009_0_2_11"/>
<dbReference type="Proteomes" id="UP000000771">
    <property type="component" value="Chromosome"/>
</dbReference>
<dbReference type="GO" id="GO:0005737">
    <property type="term" value="C:cytoplasm"/>
    <property type="evidence" value="ECO:0007669"/>
    <property type="project" value="UniProtKB-SubCell"/>
</dbReference>
<dbReference type="GO" id="GO:0005886">
    <property type="term" value="C:plasma membrane"/>
    <property type="evidence" value="ECO:0007669"/>
    <property type="project" value="UniProtKB-SubCell"/>
</dbReference>
<dbReference type="GO" id="GO:0005525">
    <property type="term" value="F:GTP binding"/>
    <property type="evidence" value="ECO:0007669"/>
    <property type="project" value="UniProtKB-UniRule"/>
</dbReference>
<dbReference type="GO" id="GO:0003924">
    <property type="term" value="F:GTPase activity"/>
    <property type="evidence" value="ECO:0007669"/>
    <property type="project" value="UniProtKB-UniRule"/>
</dbReference>
<dbReference type="GO" id="GO:0043024">
    <property type="term" value="F:ribosomal small subunit binding"/>
    <property type="evidence" value="ECO:0007669"/>
    <property type="project" value="TreeGrafter"/>
</dbReference>
<dbReference type="GO" id="GO:0070181">
    <property type="term" value="F:small ribosomal subunit rRNA binding"/>
    <property type="evidence" value="ECO:0007669"/>
    <property type="project" value="UniProtKB-UniRule"/>
</dbReference>
<dbReference type="GO" id="GO:0000028">
    <property type="term" value="P:ribosomal small subunit assembly"/>
    <property type="evidence" value="ECO:0007669"/>
    <property type="project" value="TreeGrafter"/>
</dbReference>
<dbReference type="CDD" id="cd04163">
    <property type="entry name" value="Era"/>
    <property type="match status" value="1"/>
</dbReference>
<dbReference type="CDD" id="cd22534">
    <property type="entry name" value="KH-II_Era"/>
    <property type="match status" value="1"/>
</dbReference>
<dbReference type="Gene3D" id="3.30.300.20">
    <property type="match status" value="1"/>
</dbReference>
<dbReference type="Gene3D" id="3.40.50.300">
    <property type="entry name" value="P-loop containing nucleotide triphosphate hydrolases"/>
    <property type="match status" value="1"/>
</dbReference>
<dbReference type="HAMAP" id="MF_00367">
    <property type="entry name" value="GTPase_Era"/>
    <property type="match status" value="1"/>
</dbReference>
<dbReference type="InterPro" id="IPR030388">
    <property type="entry name" value="G_ERA_dom"/>
</dbReference>
<dbReference type="InterPro" id="IPR006073">
    <property type="entry name" value="GTP-bd"/>
</dbReference>
<dbReference type="InterPro" id="IPR005662">
    <property type="entry name" value="GTPase_Era-like"/>
</dbReference>
<dbReference type="InterPro" id="IPR015946">
    <property type="entry name" value="KH_dom-like_a/b"/>
</dbReference>
<dbReference type="InterPro" id="IPR004044">
    <property type="entry name" value="KH_dom_type_2"/>
</dbReference>
<dbReference type="InterPro" id="IPR009019">
    <property type="entry name" value="KH_sf_prok-type"/>
</dbReference>
<dbReference type="InterPro" id="IPR027417">
    <property type="entry name" value="P-loop_NTPase"/>
</dbReference>
<dbReference type="InterPro" id="IPR005225">
    <property type="entry name" value="Small_GTP-bd"/>
</dbReference>
<dbReference type="NCBIfam" id="TIGR00436">
    <property type="entry name" value="era"/>
    <property type="match status" value="1"/>
</dbReference>
<dbReference type="NCBIfam" id="TIGR00231">
    <property type="entry name" value="small_GTP"/>
    <property type="match status" value="1"/>
</dbReference>
<dbReference type="PANTHER" id="PTHR42698">
    <property type="entry name" value="GTPASE ERA"/>
    <property type="match status" value="1"/>
</dbReference>
<dbReference type="PANTHER" id="PTHR42698:SF1">
    <property type="entry name" value="GTPASE ERA, MITOCHONDRIAL"/>
    <property type="match status" value="1"/>
</dbReference>
<dbReference type="Pfam" id="PF07650">
    <property type="entry name" value="KH_2"/>
    <property type="match status" value="1"/>
</dbReference>
<dbReference type="Pfam" id="PF01926">
    <property type="entry name" value="MMR_HSR1"/>
    <property type="match status" value="1"/>
</dbReference>
<dbReference type="SUPFAM" id="SSF52540">
    <property type="entry name" value="P-loop containing nucleoside triphosphate hydrolases"/>
    <property type="match status" value="1"/>
</dbReference>
<dbReference type="SUPFAM" id="SSF54814">
    <property type="entry name" value="Prokaryotic type KH domain (KH-domain type II)"/>
    <property type="match status" value="1"/>
</dbReference>
<dbReference type="PROSITE" id="PS51713">
    <property type="entry name" value="G_ERA"/>
    <property type="match status" value="1"/>
</dbReference>
<organism>
    <name type="scientific">Acidimicrobium ferrooxidans (strain DSM 10331 / JCM 15462 / NBRC 103882 / ICP)</name>
    <dbReference type="NCBI Taxonomy" id="525909"/>
    <lineage>
        <taxon>Bacteria</taxon>
        <taxon>Bacillati</taxon>
        <taxon>Actinomycetota</taxon>
        <taxon>Acidimicrobiia</taxon>
        <taxon>Acidimicrobiales</taxon>
        <taxon>Acidimicrobiaceae</taxon>
        <taxon>Acidimicrobium</taxon>
    </lineage>
</organism>
<gene>
    <name evidence="1" type="primary">era</name>
    <name type="ordered locus">Afer_1268</name>
</gene>
<proteinExistence type="inferred from homology"/>
<accession>C7LZP1</accession>
<keyword id="KW-1003">Cell membrane</keyword>
<keyword id="KW-0963">Cytoplasm</keyword>
<keyword id="KW-0342">GTP-binding</keyword>
<keyword id="KW-0472">Membrane</keyword>
<keyword id="KW-0547">Nucleotide-binding</keyword>
<keyword id="KW-1185">Reference proteome</keyword>
<keyword id="KW-0690">Ribosome biogenesis</keyword>
<keyword id="KW-0694">RNA-binding</keyword>
<keyword id="KW-0699">rRNA-binding</keyword>
<comment type="function">
    <text evidence="1">An essential GTPase that binds both GDP and GTP, with rapid nucleotide exchange. Plays a role in 16S rRNA processing and 30S ribosomal subunit biogenesis and possibly also in cell cycle regulation and energy metabolism.</text>
</comment>
<comment type="subunit">
    <text evidence="1">Monomer.</text>
</comment>
<comment type="subcellular location">
    <subcellularLocation>
        <location>Cytoplasm</location>
    </subcellularLocation>
    <subcellularLocation>
        <location evidence="1">Cell membrane</location>
        <topology evidence="1">Peripheral membrane protein</topology>
    </subcellularLocation>
</comment>
<comment type="similarity">
    <text evidence="1 2">Belongs to the TRAFAC class TrmE-Era-EngA-EngB-Septin-like GTPase superfamily. Era GTPase family.</text>
</comment>
<sequence>MDPDDAPPIRRSGFVAVIGRTNVGKSSLVNALAGERATIVSRHPNTTRRSVRVISRVGDAELVLVDTPGIAAAHDELSARLRRWVDDEWDGADRALLVVDAERGVGARERELASRLKPSDVAVVARIDRVRRARTLAVLAELAQVPLAEYFVASVRTGEGIEELRSYLASSLPEGPALYEAGVALDLPRATYVAEVVREEFLHHLRDELPQALACQVESWSDDGVEVVVYVERPSQRAIVLGHEGRVLAAVRRQAQRRLRAYPPLTLRVKVQRDWRRSARMLDELGL</sequence>
<protein>
    <recommendedName>
        <fullName evidence="1">GTPase Era</fullName>
    </recommendedName>
</protein>
<name>ERA_ACIFD</name>
<evidence type="ECO:0000255" key="1">
    <source>
        <dbReference type="HAMAP-Rule" id="MF_00367"/>
    </source>
</evidence>
<evidence type="ECO:0000255" key="2">
    <source>
        <dbReference type="PROSITE-ProRule" id="PRU01050"/>
    </source>
</evidence>
<reference key="1">
    <citation type="journal article" date="2009" name="Stand. Genomic Sci.">
        <title>Complete genome sequence of Acidimicrobium ferrooxidans type strain (ICP).</title>
        <authorList>
            <person name="Clum A."/>
            <person name="Nolan M."/>
            <person name="Lang E."/>
            <person name="Glavina Del Rio T."/>
            <person name="Tice H."/>
            <person name="Copeland A."/>
            <person name="Cheng J.F."/>
            <person name="Lucas S."/>
            <person name="Chen F."/>
            <person name="Bruce D."/>
            <person name="Goodwin L."/>
            <person name="Pitluck S."/>
            <person name="Ivanova N."/>
            <person name="Mavrommatis K."/>
            <person name="Mikhailova N."/>
            <person name="Pati A."/>
            <person name="Chen A."/>
            <person name="Palaniappan K."/>
            <person name="Goker M."/>
            <person name="Spring S."/>
            <person name="Land M."/>
            <person name="Hauser L."/>
            <person name="Chang Y.J."/>
            <person name="Jeffries C.C."/>
            <person name="Chain P."/>
            <person name="Bristow J."/>
            <person name="Eisen J.A."/>
            <person name="Markowitz V."/>
            <person name="Hugenholtz P."/>
            <person name="Kyrpides N.C."/>
            <person name="Klenk H.P."/>
            <person name="Lapidus A."/>
        </authorList>
    </citation>
    <scope>NUCLEOTIDE SEQUENCE [LARGE SCALE GENOMIC DNA]</scope>
    <source>
        <strain>DSM 10331 / JCM 15462 / NBRC 103882 / ICP</strain>
    </source>
</reference>
<feature type="chain" id="PRO_0000403966" description="GTPase Era">
    <location>
        <begin position="1"/>
        <end position="287"/>
    </location>
</feature>
<feature type="domain" description="Era-type G" evidence="2">
    <location>
        <begin position="11"/>
        <end position="174"/>
    </location>
</feature>
<feature type="domain" description="KH type-2" evidence="1">
    <location>
        <begin position="205"/>
        <end position="273"/>
    </location>
</feature>
<feature type="binding site" evidence="1">
    <location>
        <begin position="19"/>
        <end position="26"/>
    </location>
    <ligand>
        <name>GTP</name>
        <dbReference type="ChEBI" id="CHEBI:37565"/>
    </ligand>
</feature>
<feature type="binding site" evidence="1">
    <location>
        <begin position="66"/>
        <end position="70"/>
    </location>
    <ligand>
        <name>GTP</name>
        <dbReference type="ChEBI" id="CHEBI:37565"/>
    </ligand>
</feature>